<reference key="1">
    <citation type="submission" date="2006-08" db="EMBL/GenBank/DDBJ databases">
        <title>Complete sequence of chromosome 1 of Burkholderia cenocepacia HI2424.</title>
        <authorList>
            <person name="Copeland A."/>
            <person name="Lucas S."/>
            <person name="Lapidus A."/>
            <person name="Barry K."/>
            <person name="Detter J.C."/>
            <person name="Glavina del Rio T."/>
            <person name="Hammon N."/>
            <person name="Israni S."/>
            <person name="Pitluck S."/>
            <person name="Chain P."/>
            <person name="Malfatti S."/>
            <person name="Shin M."/>
            <person name="Vergez L."/>
            <person name="Schmutz J."/>
            <person name="Larimer F."/>
            <person name="Land M."/>
            <person name="Hauser L."/>
            <person name="Kyrpides N."/>
            <person name="Kim E."/>
            <person name="LiPuma J.J."/>
            <person name="Gonzalez C.F."/>
            <person name="Konstantinidis K."/>
            <person name="Tiedje J.M."/>
            <person name="Richardson P."/>
        </authorList>
    </citation>
    <scope>NUCLEOTIDE SEQUENCE [LARGE SCALE GENOMIC DNA]</scope>
    <source>
        <strain>HI2424</strain>
    </source>
</reference>
<organism>
    <name type="scientific">Burkholderia cenocepacia (strain HI2424)</name>
    <dbReference type="NCBI Taxonomy" id="331272"/>
    <lineage>
        <taxon>Bacteria</taxon>
        <taxon>Pseudomonadati</taxon>
        <taxon>Pseudomonadota</taxon>
        <taxon>Betaproteobacteria</taxon>
        <taxon>Burkholderiales</taxon>
        <taxon>Burkholderiaceae</taxon>
        <taxon>Burkholderia</taxon>
        <taxon>Burkholderia cepacia complex</taxon>
    </lineage>
</organism>
<gene>
    <name evidence="1" type="primary">nadK</name>
    <name type="ordered locus">Bcen2424_0744</name>
</gene>
<proteinExistence type="inferred from homology"/>
<dbReference type="EC" id="2.7.1.23" evidence="1"/>
<dbReference type="EMBL" id="CP000458">
    <property type="protein sequence ID" value="ABK07497.1"/>
    <property type="molecule type" value="Genomic_DNA"/>
</dbReference>
<dbReference type="RefSeq" id="WP_011544636.1">
    <property type="nucleotide sequence ID" value="NC_008542.1"/>
</dbReference>
<dbReference type="SMR" id="A0K4S0"/>
<dbReference type="KEGG" id="bch:Bcen2424_0744"/>
<dbReference type="HOGENOM" id="CLU_008831_0_1_4"/>
<dbReference type="GO" id="GO:0005737">
    <property type="term" value="C:cytoplasm"/>
    <property type="evidence" value="ECO:0007669"/>
    <property type="project" value="UniProtKB-SubCell"/>
</dbReference>
<dbReference type="GO" id="GO:0005524">
    <property type="term" value="F:ATP binding"/>
    <property type="evidence" value="ECO:0007669"/>
    <property type="project" value="UniProtKB-KW"/>
</dbReference>
<dbReference type="GO" id="GO:0046872">
    <property type="term" value="F:metal ion binding"/>
    <property type="evidence" value="ECO:0007669"/>
    <property type="project" value="UniProtKB-UniRule"/>
</dbReference>
<dbReference type="GO" id="GO:0051287">
    <property type="term" value="F:NAD binding"/>
    <property type="evidence" value="ECO:0007669"/>
    <property type="project" value="UniProtKB-ARBA"/>
</dbReference>
<dbReference type="GO" id="GO:0003951">
    <property type="term" value="F:NAD+ kinase activity"/>
    <property type="evidence" value="ECO:0007669"/>
    <property type="project" value="UniProtKB-UniRule"/>
</dbReference>
<dbReference type="GO" id="GO:0019674">
    <property type="term" value="P:NAD metabolic process"/>
    <property type="evidence" value="ECO:0007669"/>
    <property type="project" value="InterPro"/>
</dbReference>
<dbReference type="GO" id="GO:0006741">
    <property type="term" value="P:NADP biosynthetic process"/>
    <property type="evidence" value="ECO:0007669"/>
    <property type="project" value="UniProtKB-UniRule"/>
</dbReference>
<dbReference type="Gene3D" id="3.40.50.10330">
    <property type="entry name" value="Probable inorganic polyphosphate/atp-NAD kinase, domain 1"/>
    <property type="match status" value="1"/>
</dbReference>
<dbReference type="Gene3D" id="2.60.200.30">
    <property type="entry name" value="Probable inorganic polyphosphate/atp-NAD kinase, domain 2"/>
    <property type="match status" value="1"/>
</dbReference>
<dbReference type="HAMAP" id="MF_00361">
    <property type="entry name" value="NAD_kinase"/>
    <property type="match status" value="1"/>
</dbReference>
<dbReference type="InterPro" id="IPR017438">
    <property type="entry name" value="ATP-NAD_kinase_N"/>
</dbReference>
<dbReference type="InterPro" id="IPR017437">
    <property type="entry name" value="ATP-NAD_kinase_PpnK-typ_C"/>
</dbReference>
<dbReference type="InterPro" id="IPR016064">
    <property type="entry name" value="NAD/diacylglycerol_kinase_sf"/>
</dbReference>
<dbReference type="InterPro" id="IPR002504">
    <property type="entry name" value="NADK"/>
</dbReference>
<dbReference type="NCBIfam" id="NF002561">
    <property type="entry name" value="PRK02155.1"/>
    <property type="match status" value="1"/>
</dbReference>
<dbReference type="PANTHER" id="PTHR20275">
    <property type="entry name" value="NAD KINASE"/>
    <property type="match status" value="1"/>
</dbReference>
<dbReference type="PANTHER" id="PTHR20275:SF0">
    <property type="entry name" value="NAD KINASE"/>
    <property type="match status" value="1"/>
</dbReference>
<dbReference type="Pfam" id="PF01513">
    <property type="entry name" value="NAD_kinase"/>
    <property type="match status" value="1"/>
</dbReference>
<dbReference type="Pfam" id="PF20143">
    <property type="entry name" value="NAD_kinase_C"/>
    <property type="match status" value="1"/>
</dbReference>
<dbReference type="SUPFAM" id="SSF111331">
    <property type="entry name" value="NAD kinase/diacylglycerol kinase-like"/>
    <property type="match status" value="1"/>
</dbReference>
<protein>
    <recommendedName>
        <fullName evidence="1">NAD kinase</fullName>
        <ecNumber evidence="1">2.7.1.23</ecNumber>
    </recommendedName>
    <alternativeName>
        <fullName evidence="1">ATP-dependent NAD kinase</fullName>
    </alternativeName>
</protein>
<keyword id="KW-0067">ATP-binding</keyword>
<keyword id="KW-0963">Cytoplasm</keyword>
<keyword id="KW-0418">Kinase</keyword>
<keyword id="KW-0520">NAD</keyword>
<keyword id="KW-0521">NADP</keyword>
<keyword id="KW-0547">Nucleotide-binding</keyword>
<keyword id="KW-0808">Transferase</keyword>
<name>NADK_BURCH</name>
<evidence type="ECO:0000255" key="1">
    <source>
        <dbReference type="HAMAP-Rule" id="MF_00361"/>
    </source>
</evidence>
<accession>A0K4S0</accession>
<comment type="function">
    <text evidence="1">Involved in the regulation of the intracellular balance of NAD and NADP, and is a key enzyme in the biosynthesis of NADP. Catalyzes specifically the phosphorylation on 2'-hydroxyl of the adenosine moiety of NAD to yield NADP.</text>
</comment>
<comment type="catalytic activity">
    <reaction evidence="1">
        <text>NAD(+) + ATP = ADP + NADP(+) + H(+)</text>
        <dbReference type="Rhea" id="RHEA:18629"/>
        <dbReference type="ChEBI" id="CHEBI:15378"/>
        <dbReference type="ChEBI" id="CHEBI:30616"/>
        <dbReference type="ChEBI" id="CHEBI:57540"/>
        <dbReference type="ChEBI" id="CHEBI:58349"/>
        <dbReference type="ChEBI" id="CHEBI:456216"/>
        <dbReference type="EC" id="2.7.1.23"/>
    </reaction>
</comment>
<comment type="cofactor">
    <cofactor evidence="1">
        <name>a divalent metal cation</name>
        <dbReference type="ChEBI" id="CHEBI:60240"/>
    </cofactor>
</comment>
<comment type="subcellular location">
    <subcellularLocation>
        <location evidence="1">Cytoplasm</location>
    </subcellularLocation>
</comment>
<comment type="similarity">
    <text evidence="1">Belongs to the NAD kinase family.</text>
</comment>
<sequence>MKTGNQFKTVALVGRSNTPGIAEPLATLADSIATLGFEVVFEGDTAREIGIAGYPALTPAEIGARADVAIVLGGDGTMLGIGRQLAPYRTPLIGINHGRLGFITDIAASDMQALVPVMLAGKFEREERSLLEARIVRDGEPIYHALAFNDVVVNRSGFSGMVELRASVDGRYMYNQRSDGLIVATPTGSTAYALSSAGPILHPQLAGVVLVPIAPHALSNRPIVLPDDSKIAIQIVGGRDVNVNFDMQSFTSLELNDTIEVRRSKHTVPFLHPIGYSYYTTLRKKLHWNEHASNEDDKAS</sequence>
<feature type="chain" id="PRO_1000005392" description="NAD kinase">
    <location>
        <begin position="1"/>
        <end position="300"/>
    </location>
</feature>
<feature type="active site" description="Proton acceptor" evidence="1">
    <location>
        <position position="75"/>
    </location>
</feature>
<feature type="binding site" evidence="1">
    <location>
        <begin position="75"/>
        <end position="76"/>
    </location>
    <ligand>
        <name>NAD(+)</name>
        <dbReference type="ChEBI" id="CHEBI:57540"/>
    </ligand>
</feature>
<feature type="binding site" evidence="1">
    <location>
        <begin position="149"/>
        <end position="150"/>
    </location>
    <ligand>
        <name>NAD(+)</name>
        <dbReference type="ChEBI" id="CHEBI:57540"/>
    </ligand>
</feature>
<feature type="binding site" evidence="1">
    <location>
        <position position="177"/>
    </location>
    <ligand>
        <name>NAD(+)</name>
        <dbReference type="ChEBI" id="CHEBI:57540"/>
    </ligand>
</feature>
<feature type="binding site" evidence="1">
    <location>
        <position position="179"/>
    </location>
    <ligand>
        <name>NAD(+)</name>
        <dbReference type="ChEBI" id="CHEBI:57540"/>
    </ligand>
</feature>
<feature type="binding site" evidence="1">
    <location>
        <begin position="190"/>
        <end position="195"/>
    </location>
    <ligand>
        <name>NAD(+)</name>
        <dbReference type="ChEBI" id="CHEBI:57540"/>
    </ligand>
</feature>
<feature type="binding site" evidence="1">
    <location>
        <position position="214"/>
    </location>
    <ligand>
        <name>NAD(+)</name>
        <dbReference type="ChEBI" id="CHEBI:57540"/>
    </ligand>
</feature>
<feature type="binding site" evidence="1">
    <location>
        <position position="248"/>
    </location>
    <ligand>
        <name>NAD(+)</name>
        <dbReference type="ChEBI" id="CHEBI:57540"/>
    </ligand>
</feature>